<reference key="1">
    <citation type="journal article" date="2005" name="Genome Res.">
        <title>Sequence, annotation, and analysis of synteny between rice chromosome 3 and diverged grass species.</title>
        <authorList>
            <consortium name="The rice chromosome 3 sequencing consortium"/>
            <person name="Buell C.R."/>
            <person name="Yuan Q."/>
            <person name="Ouyang S."/>
            <person name="Liu J."/>
            <person name="Zhu W."/>
            <person name="Wang A."/>
            <person name="Maiti R."/>
            <person name="Haas B."/>
            <person name="Wortman J."/>
            <person name="Pertea M."/>
            <person name="Jones K.M."/>
            <person name="Kim M."/>
            <person name="Overton L."/>
            <person name="Tsitrin T."/>
            <person name="Fadrosh D."/>
            <person name="Bera J."/>
            <person name="Weaver B."/>
            <person name="Jin S."/>
            <person name="Johri S."/>
            <person name="Reardon M."/>
            <person name="Webb K."/>
            <person name="Hill J."/>
            <person name="Moffat K."/>
            <person name="Tallon L."/>
            <person name="Van Aken S."/>
            <person name="Lewis M."/>
            <person name="Utterback T."/>
            <person name="Feldblyum T."/>
            <person name="Zismann V."/>
            <person name="Iobst S."/>
            <person name="Hsiao J."/>
            <person name="de Vazeille A.R."/>
            <person name="Salzberg S.L."/>
            <person name="White O."/>
            <person name="Fraser C.M."/>
            <person name="Yu Y."/>
            <person name="Kim H."/>
            <person name="Rambo T."/>
            <person name="Currie J."/>
            <person name="Collura K."/>
            <person name="Kernodle-Thompson S."/>
            <person name="Wei F."/>
            <person name="Kudrna K."/>
            <person name="Ammiraju J.S.S."/>
            <person name="Luo M."/>
            <person name="Goicoechea J.L."/>
            <person name="Wing R.A."/>
            <person name="Henry D."/>
            <person name="Oates R."/>
            <person name="Palmer M."/>
            <person name="Pries G."/>
            <person name="Saski C."/>
            <person name="Simmons J."/>
            <person name="Soderlund C."/>
            <person name="Nelson W."/>
            <person name="de la Bastide M."/>
            <person name="Spiegel L."/>
            <person name="Nascimento L."/>
            <person name="Huang E."/>
            <person name="Preston R."/>
            <person name="Zutavern T."/>
            <person name="Palmer L."/>
            <person name="O'Shaughnessy A."/>
            <person name="Dike S."/>
            <person name="McCombie W.R."/>
            <person name="Minx P."/>
            <person name="Cordum H."/>
            <person name="Wilson R."/>
            <person name="Jin W."/>
            <person name="Lee H.R."/>
            <person name="Jiang J."/>
            <person name="Jackson S."/>
        </authorList>
    </citation>
    <scope>NUCLEOTIDE SEQUENCE [LARGE SCALE GENOMIC DNA]</scope>
    <source>
        <strain>cv. Nipponbare</strain>
    </source>
</reference>
<reference key="2">
    <citation type="journal article" date="2005" name="Nature">
        <title>The map-based sequence of the rice genome.</title>
        <authorList>
            <consortium name="International rice genome sequencing project (IRGSP)"/>
        </authorList>
    </citation>
    <scope>NUCLEOTIDE SEQUENCE [LARGE SCALE GENOMIC DNA]</scope>
    <source>
        <strain>cv. Nipponbare</strain>
    </source>
</reference>
<reference key="3">
    <citation type="journal article" date="2008" name="Nucleic Acids Res.">
        <title>The rice annotation project database (RAP-DB): 2008 update.</title>
        <authorList>
            <consortium name="The rice annotation project (RAP)"/>
        </authorList>
    </citation>
    <scope>GENOME REANNOTATION</scope>
    <source>
        <strain>cv. Nipponbare</strain>
    </source>
</reference>
<reference key="4">
    <citation type="journal article" date="2013" name="Rice">
        <title>Improvement of the Oryza sativa Nipponbare reference genome using next generation sequence and optical map data.</title>
        <authorList>
            <person name="Kawahara Y."/>
            <person name="de la Bastide M."/>
            <person name="Hamilton J.P."/>
            <person name="Kanamori H."/>
            <person name="McCombie W.R."/>
            <person name="Ouyang S."/>
            <person name="Schwartz D.C."/>
            <person name="Tanaka T."/>
            <person name="Wu J."/>
            <person name="Zhou S."/>
            <person name="Childs K.L."/>
            <person name="Davidson R.M."/>
            <person name="Lin H."/>
            <person name="Quesada-Ocampo L."/>
            <person name="Vaillancourt B."/>
            <person name="Sakai H."/>
            <person name="Lee S.S."/>
            <person name="Kim J."/>
            <person name="Numa H."/>
            <person name="Itoh T."/>
            <person name="Buell C.R."/>
            <person name="Matsumoto T."/>
        </authorList>
    </citation>
    <scope>GENOME REANNOTATION</scope>
    <source>
        <strain>cv. Nipponbare</strain>
    </source>
</reference>
<reference key="5">
    <citation type="journal article" date="2011" name="Cell Res.">
        <title>OsAM1 is required for leptotene-zygotene transition in rice.</title>
        <authorList>
            <person name="Che L."/>
            <person name="Tang D."/>
            <person name="Wang K."/>
            <person name="Wang M."/>
            <person name="Zhu K."/>
            <person name="Yu H."/>
            <person name="Gu M."/>
            <person name="Cheng Z."/>
        </authorList>
    </citation>
    <scope>FUNCTION</scope>
    <scope>SUBCELLULAR LOCATION</scope>
    <scope>MUTAGENESIS OF ARG-360</scope>
    <source>
        <strain>cv. Wuxiangjing 9</strain>
    </source>
</reference>
<evidence type="ECO:0000255" key="1"/>
<evidence type="ECO:0000256" key="2">
    <source>
        <dbReference type="SAM" id="MobiDB-lite"/>
    </source>
</evidence>
<evidence type="ECO:0000269" key="3">
    <source>
    </source>
</evidence>
<evidence type="ECO:0000303" key="4">
    <source>
    </source>
</evidence>
<evidence type="ECO:0000312" key="5">
    <source>
        <dbReference type="EMBL" id="ABF97914.1"/>
    </source>
</evidence>
<evidence type="ECO:0000312" key="6">
    <source>
        <dbReference type="EMBL" id="BAF12699.1"/>
    </source>
</evidence>
<accession>Q53KW9</accession>
<sequence>MDAEMAAPALAAAHLLDSPMRPQVSRYYSKKRGSSHSRNGKDDANHDESKNQSPGLPLSRQSLSSSATHTYHTGGFYEIDHEKLPPKSPIHLKSIRVVKVSGYTSLDVTVSFPSLLALRSFFSSSPRSCTGPELDERFVMSSNHAARILRRRVAEEELAGDVMHQDSFWLVKPCLYDFSASSPHDVLTPSPPPATAQAKAPAASSCLLDTLKCDGAGWGVRRRVRYIGRHHDASKEASAASLDGYNTEVSVQEEQQQRLRLRLRLRQRREQEDNKSTSNGKRKREEAESSMDKSRAARKKKAKTYKSPKKVEKRRVVEAKDGDPRRGKDRWSAERYAAAERSLLDIMRSHGACFGAPVMRQALREEARKHIGDTGLLDHLLKHMAGRVPEGSADRFRRRHNADGAMEYWLEPAELAEVRRLAGVSDPYWVPPPGWKPGDDVSAVAGDLLVKKKVEELAEEVDGVKRHIEQLSSNLVQLEKETKSEAERSYSSRKEKYQKLMKANEKLEKQVLSMKDMYEHLVQKKGKLKKEVLSLKDKYKLVLEKNDKLEEQMASLSSSFLSLKEQLLLPRNGDNLNMERERVEVTLGKQEGLVPGEPLYVDGGDRISQQADATVVQVGEKRTARKSSFRICKPQGTFMWPHMASGTSMAISGGGSSSCPVASGPEQLPRSSSCPSIGPGGLPPSSRAPAEVVVASPLDEHVAFRGGFNTPPSASSTNAAAAAKLPPLPSPTSPLQTRALFAAGFTVPALHNFSGLTLRHVDSSSPSSAPCGAREKMVTLFDGDCRGISVVGTELALATPSYC</sequence>
<feature type="chain" id="PRO_0000444505" description="Protein AMEIOTIC 1 homolog">
    <location>
        <begin position="1"/>
        <end position="803"/>
    </location>
</feature>
<feature type="region of interest" description="Disordered" evidence="2">
    <location>
        <begin position="21"/>
        <end position="64"/>
    </location>
</feature>
<feature type="region of interest" description="Disordered" evidence="2">
    <location>
        <begin position="264"/>
        <end position="333"/>
    </location>
</feature>
<feature type="region of interest" description="Disordered" evidence="2">
    <location>
        <begin position="651"/>
        <end position="688"/>
    </location>
</feature>
<feature type="coiled-coil region" evidence="1">
    <location>
        <begin position="450"/>
        <end position="567"/>
    </location>
</feature>
<feature type="compositionally biased region" description="Basic and acidic residues" evidence="2">
    <location>
        <begin position="39"/>
        <end position="50"/>
    </location>
</feature>
<feature type="compositionally biased region" description="Polar residues" evidence="2">
    <location>
        <begin position="51"/>
        <end position="64"/>
    </location>
</feature>
<feature type="compositionally biased region" description="Basic and acidic residues" evidence="2">
    <location>
        <begin position="283"/>
        <end position="295"/>
    </location>
</feature>
<feature type="compositionally biased region" description="Basic residues" evidence="2">
    <location>
        <begin position="296"/>
        <end position="313"/>
    </location>
</feature>
<feature type="compositionally biased region" description="Basic and acidic residues" evidence="2">
    <location>
        <begin position="314"/>
        <end position="333"/>
    </location>
</feature>
<feature type="mutagenesis site" description="In Osam1-1; sterile phenotype due to male meiosis arrested at leptotene." evidence="3">
    <original>R</original>
    <variation>W</variation>
    <location>
        <position position="360"/>
    </location>
</feature>
<protein>
    <recommendedName>
        <fullName evidence="4">Protein AMEIOTIC 1 homolog</fullName>
        <shortName evidence="4">OsAM1</shortName>
    </recommendedName>
</protein>
<name>AM1_ORYSJ</name>
<comment type="function">
    <text evidence="3">Plays a fundamental role in building the proper chromosome structure at the beginning of meiosis in male meiocytes. Required for the transition from leptotene to zygotene in meiocytes. Required for homologous chromosome pairing.</text>
</comment>
<comment type="subcellular location">
    <subcellularLocation>
        <location evidence="3">Nucleus</location>
    </subcellularLocation>
    <subcellularLocation>
        <location>Chromosome</location>
    </subcellularLocation>
    <text evidence="3">Diffuse localization in the nucleus during the initiation of meiosis. Binds to chromatin in early meiotic prophase I.</text>
</comment>
<dbReference type="EMBL" id="AC145381">
    <property type="protein sequence ID" value="AAX95530.1"/>
    <property type="molecule type" value="Genomic_DNA"/>
</dbReference>
<dbReference type="EMBL" id="DP000009">
    <property type="protein sequence ID" value="ABF97914.1"/>
    <property type="molecule type" value="Genomic_DNA"/>
</dbReference>
<dbReference type="EMBL" id="AP008209">
    <property type="protein sequence ID" value="BAF12699.1"/>
    <property type="molecule type" value="Genomic_DNA"/>
</dbReference>
<dbReference type="EMBL" id="AP014959">
    <property type="protein sequence ID" value="BAS85511.1"/>
    <property type="molecule type" value="Genomic_DNA"/>
</dbReference>
<dbReference type="SMR" id="Q53KW9"/>
<dbReference type="FunCoup" id="Q53KW9">
    <property type="interactions" value="931"/>
</dbReference>
<dbReference type="STRING" id="39947.Q53KW9"/>
<dbReference type="PaxDb" id="39947-Q53KW9"/>
<dbReference type="EnsemblPlants" id="Os03t0650400-02">
    <property type="protein sequence ID" value="Os03t0650400-02"/>
    <property type="gene ID" value="Os03g0650400"/>
</dbReference>
<dbReference type="Gramene" id="Os03t0650400-02">
    <property type="protein sequence ID" value="Os03t0650400-02"/>
    <property type="gene ID" value="Os03g0650400"/>
</dbReference>
<dbReference type="KEGG" id="dosa:Os03g0650400"/>
<dbReference type="KEGG" id="osa:4333586"/>
<dbReference type="eggNOG" id="ENOG502QU2W">
    <property type="taxonomic scope" value="Eukaryota"/>
</dbReference>
<dbReference type="InParanoid" id="Q53KW9"/>
<dbReference type="OMA" id="GFQICKP"/>
<dbReference type="OrthoDB" id="515863at2759"/>
<dbReference type="Proteomes" id="UP000000763">
    <property type="component" value="Chromosome 3"/>
</dbReference>
<dbReference type="Proteomes" id="UP000059680">
    <property type="component" value="Chromosome 3"/>
</dbReference>
<dbReference type="ExpressionAtlas" id="Q53KW9">
    <property type="expression patterns" value="baseline and differential"/>
</dbReference>
<dbReference type="GO" id="GO:0005694">
    <property type="term" value="C:chromosome"/>
    <property type="evidence" value="ECO:0000314"/>
    <property type="project" value="UniProtKB"/>
</dbReference>
<dbReference type="GO" id="GO:0005634">
    <property type="term" value="C:nucleus"/>
    <property type="evidence" value="ECO:0000314"/>
    <property type="project" value="UniProtKB"/>
</dbReference>
<dbReference type="GO" id="GO:0051301">
    <property type="term" value="P:cell division"/>
    <property type="evidence" value="ECO:0007669"/>
    <property type="project" value="UniProtKB-KW"/>
</dbReference>
<dbReference type="GO" id="GO:0007059">
    <property type="term" value="P:chromosome segregation"/>
    <property type="evidence" value="ECO:0007669"/>
    <property type="project" value="UniProtKB-KW"/>
</dbReference>
<dbReference type="GO" id="GO:0051321">
    <property type="term" value="P:meiotic cell cycle"/>
    <property type="evidence" value="ECO:0000315"/>
    <property type="project" value="UniProtKB"/>
</dbReference>
<dbReference type="GO" id="GO:0051177">
    <property type="term" value="P:meiotic sister chromatid cohesion"/>
    <property type="evidence" value="ECO:0007669"/>
    <property type="project" value="InterPro"/>
</dbReference>
<dbReference type="GO" id="GO:0007131">
    <property type="term" value="P:reciprocal meiotic recombination"/>
    <property type="evidence" value="ECO:0007669"/>
    <property type="project" value="InterPro"/>
</dbReference>
<dbReference type="InterPro" id="IPR044221">
    <property type="entry name" value="DYAD/AMEIOTIC1"/>
</dbReference>
<dbReference type="PANTHER" id="PTHR46740">
    <property type="entry name" value="PROTEIN DYAD"/>
    <property type="match status" value="1"/>
</dbReference>
<dbReference type="PANTHER" id="PTHR46740:SF2">
    <property type="entry name" value="PROTEIN DYAD"/>
    <property type="match status" value="1"/>
</dbReference>
<proteinExistence type="evidence at protein level"/>
<organism>
    <name type="scientific">Oryza sativa subsp. japonica</name>
    <name type="common">Rice</name>
    <dbReference type="NCBI Taxonomy" id="39947"/>
    <lineage>
        <taxon>Eukaryota</taxon>
        <taxon>Viridiplantae</taxon>
        <taxon>Streptophyta</taxon>
        <taxon>Embryophyta</taxon>
        <taxon>Tracheophyta</taxon>
        <taxon>Spermatophyta</taxon>
        <taxon>Magnoliopsida</taxon>
        <taxon>Liliopsida</taxon>
        <taxon>Poales</taxon>
        <taxon>Poaceae</taxon>
        <taxon>BOP clade</taxon>
        <taxon>Oryzoideae</taxon>
        <taxon>Oryzeae</taxon>
        <taxon>Oryzinae</taxon>
        <taxon>Oryza</taxon>
        <taxon>Oryza sativa</taxon>
    </lineage>
</organism>
<gene>
    <name evidence="4" type="primary">AM1</name>
    <name evidence="6" type="ordered locus">Os03g0650400</name>
    <name evidence="5" type="ordered locus">LOC_Os03g44760</name>
</gene>
<keyword id="KW-0131">Cell cycle</keyword>
<keyword id="KW-0132">Cell division</keyword>
<keyword id="KW-0158">Chromosome</keyword>
<keyword id="KW-0159">Chromosome partition</keyword>
<keyword id="KW-0175">Coiled coil</keyword>
<keyword id="KW-0469">Meiosis</keyword>
<keyword id="KW-0539">Nucleus</keyword>
<keyword id="KW-1185">Reference proteome</keyword>